<organism>
    <name type="scientific">Cereibacter sphaeroides (strain ATCC 17023 / DSM 158 / JCM 6121 / CCUG 31486 / LMG 2827 / NBRC 12203 / NCIMB 8253 / ATH 2.4.1.)</name>
    <name type="common">Rhodobacter sphaeroides</name>
    <dbReference type="NCBI Taxonomy" id="272943"/>
    <lineage>
        <taxon>Bacteria</taxon>
        <taxon>Pseudomonadati</taxon>
        <taxon>Pseudomonadota</taxon>
        <taxon>Alphaproteobacteria</taxon>
        <taxon>Rhodobacterales</taxon>
        <taxon>Paracoccaceae</taxon>
        <taxon>Cereibacter</taxon>
    </lineage>
</organism>
<keyword id="KW-0143">Chaperone</keyword>
<keyword id="KW-0963">Cytoplasm</keyword>
<keyword id="KW-0342">GTP-binding</keyword>
<keyword id="KW-0996">Nickel insertion</keyword>
<keyword id="KW-0547">Nucleotide-binding</keyword>
<keyword id="KW-1185">Reference proteome</keyword>
<dbReference type="EMBL" id="AF195122">
    <property type="protein sequence ID" value="AAF24258.1"/>
    <property type="molecule type" value="Genomic_DNA"/>
</dbReference>
<dbReference type="EMBL" id="CP000143">
    <property type="protein sequence ID" value="ABA79476.1"/>
    <property type="molecule type" value="Genomic_DNA"/>
</dbReference>
<dbReference type="RefSeq" id="WP_011338135.1">
    <property type="nucleotide sequence ID" value="NC_007493.2"/>
</dbReference>
<dbReference type="RefSeq" id="YP_353377.1">
    <property type="nucleotide sequence ID" value="NC_007493.2"/>
</dbReference>
<dbReference type="SMR" id="Q3J158"/>
<dbReference type="STRING" id="272943.RSP_0302"/>
<dbReference type="EnsemblBacteria" id="ABA79476">
    <property type="protein sequence ID" value="ABA79476"/>
    <property type="gene ID" value="RSP_0302"/>
</dbReference>
<dbReference type="GeneID" id="3719157"/>
<dbReference type="KEGG" id="rsp:RSP_0302"/>
<dbReference type="PATRIC" id="fig|272943.9.peg.2247"/>
<dbReference type="eggNOG" id="COG0378">
    <property type="taxonomic scope" value="Bacteria"/>
</dbReference>
<dbReference type="OrthoDB" id="9802035at2"/>
<dbReference type="PhylomeDB" id="Q3J158"/>
<dbReference type="Proteomes" id="UP000002703">
    <property type="component" value="Chromosome 1"/>
</dbReference>
<dbReference type="GO" id="GO:0005737">
    <property type="term" value="C:cytoplasm"/>
    <property type="evidence" value="ECO:0007669"/>
    <property type="project" value="UniProtKB-SubCell"/>
</dbReference>
<dbReference type="GO" id="GO:0005525">
    <property type="term" value="F:GTP binding"/>
    <property type="evidence" value="ECO:0007669"/>
    <property type="project" value="UniProtKB-KW"/>
</dbReference>
<dbReference type="GO" id="GO:0003924">
    <property type="term" value="F:GTPase activity"/>
    <property type="evidence" value="ECO:0007669"/>
    <property type="project" value="InterPro"/>
</dbReference>
<dbReference type="GO" id="GO:0016151">
    <property type="term" value="F:nickel cation binding"/>
    <property type="evidence" value="ECO:0007669"/>
    <property type="project" value="UniProtKB-UniRule"/>
</dbReference>
<dbReference type="GO" id="GO:0043419">
    <property type="term" value="P:urea catabolic process"/>
    <property type="evidence" value="ECO:0007669"/>
    <property type="project" value="InterPro"/>
</dbReference>
<dbReference type="CDD" id="cd05540">
    <property type="entry name" value="UreG"/>
    <property type="match status" value="1"/>
</dbReference>
<dbReference type="Gene3D" id="3.40.50.300">
    <property type="entry name" value="P-loop containing nucleotide triphosphate hydrolases"/>
    <property type="match status" value="1"/>
</dbReference>
<dbReference type="HAMAP" id="MF_01389">
    <property type="entry name" value="UreG"/>
    <property type="match status" value="1"/>
</dbReference>
<dbReference type="InterPro" id="IPR003495">
    <property type="entry name" value="CobW/HypB/UreG_nucleotide-bd"/>
</dbReference>
<dbReference type="InterPro" id="IPR027417">
    <property type="entry name" value="P-loop_NTPase"/>
</dbReference>
<dbReference type="InterPro" id="IPR004400">
    <property type="entry name" value="UreG"/>
</dbReference>
<dbReference type="NCBIfam" id="TIGR00101">
    <property type="entry name" value="ureG"/>
    <property type="match status" value="1"/>
</dbReference>
<dbReference type="PANTHER" id="PTHR31715">
    <property type="entry name" value="UREASE ACCESSORY PROTEIN G"/>
    <property type="match status" value="1"/>
</dbReference>
<dbReference type="PANTHER" id="PTHR31715:SF0">
    <property type="entry name" value="UREASE ACCESSORY PROTEIN G"/>
    <property type="match status" value="1"/>
</dbReference>
<dbReference type="Pfam" id="PF02492">
    <property type="entry name" value="cobW"/>
    <property type="match status" value="1"/>
</dbReference>
<dbReference type="PIRSF" id="PIRSF005624">
    <property type="entry name" value="Ni-bind_GTPase"/>
    <property type="match status" value="1"/>
</dbReference>
<dbReference type="SUPFAM" id="SSF52540">
    <property type="entry name" value="P-loop containing nucleoside triphosphate hydrolases"/>
    <property type="match status" value="1"/>
</dbReference>
<comment type="function">
    <text evidence="1">Facilitates the functional incorporation of the urease nickel metallocenter. This process requires GTP hydrolysis, probably effectuated by UreG.</text>
</comment>
<comment type="subunit">
    <text evidence="1">Homodimer. UreD, UreF and UreG form a complex that acts as a GTP-hydrolysis-dependent molecular chaperone, activating the urease apoprotein by helping to assemble the nickel containing metallocenter of UreC. The UreE protein probably delivers the nickel.</text>
</comment>
<comment type="subcellular location">
    <subcellularLocation>
        <location evidence="1">Cytoplasm</location>
    </subcellularLocation>
</comment>
<comment type="similarity">
    <text evidence="1">Belongs to the SIMIBI class G3E GTPase family. UreG subfamily.</text>
</comment>
<evidence type="ECO:0000255" key="1">
    <source>
        <dbReference type="HAMAP-Rule" id="MF_01389"/>
    </source>
</evidence>
<evidence type="ECO:0000305" key="2"/>
<sequence length="207" mass="21968">MSHGPLRVGIGGPVGAGKTTLTEKLCAALAHRCSMAVITNDIYTREDAEALMRAQVLPAERIRGVETGGCPHTAIREDASINLAAVADLRRTFPDLDLILIESGGDNLAATFSPELADLTIYVIDTAAGQDIPRKRGPGLARSDLLVVNKIDLAPHVGVDLARLEADTQAARGQRPYVMARMRAGVGVEAIVAFLEREGGLQLLPQD</sequence>
<accession>Q3J158</accession>
<accession>Q9RFE9</accession>
<gene>
    <name evidence="1" type="primary">ureG</name>
    <name type="ordered locus">RHOS4_19080</name>
    <name type="ORF">RSP_0302</name>
</gene>
<protein>
    <recommendedName>
        <fullName evidence="1">Urease accessory protein UreG</fullName>
    </recommendedName>
</protein>
<proteinExistence type="inferred from homology"/>
<name>UREG_CERS4</name>
<feature type="chain" id="PRO_0000347438" description="Urease accessory protein UreG">
    <location>
        <begin position="1"/>
        <end position="207"/>
    </location>
</feature>
<feature type="binding site" evidence="1">
    <location>
        <begin position="12"/>
        <end position="19"/>
    </location>
    <ligand>
        <name>GTP</name>
        <dbReference type="ChEBI" id="CHEBI:37565"/>
    </ligand>
</feature>
<feature type="sequence conflict" description="In Ref. 1; AAF24258." evidence="2" ref="1">
    <original>HGPLRVGIGGPVGAGKTTL</original>
    <variation>MDPCAWGSAARWAPARRPS</variation>
    <location>
        <begin position="3"/>
        <end position="21"/>
    </location>
</feature>
<feature type="sequence conflict" description="In Ref. 1; AAF24258." evidence="2" ref="1">
    <original>GCPH</original>
    <variation>AAPY</variation>
    <location>
        <begin position="69"/>
        <end position="72"/>
    </location>
</feature>
<reference key="1">
    <citation type="journal article" date="2000" name="Nucleic Acids Res.">
        <title>DNA sequence analysis of the photosynthesis region of Rhodobacter sphaeroides 2.4.1.</title>
        <authorList>
            <person name="Choudhary M."/>
            <person name="Kaplan S."/>
        </authorList>
    </citation>
    <scope>NUCLEOTIDE SEQUENCE [GENOMIC DNA]</scope>
</reference>
<reference key="2">
    <citation type="submission" date="2005-09" db="EMBL/GenBank/DDBJ databases">
        <title>Complete sequence of chromosome 1 of Rhodobacter sphaeroides 2.4.1.</title>
        <authorList>
            <person name="Copeland A."/>
            <person name="Lucas S."/>
            <person name="Lapidus A."/>
            <person name="Barry K."/>
            <person name="Detter J.C."/>
            <person name="Glavina T."/>
            <person name="Hammon N."/>
            <person name="Israni S."/>
            <person name="Pitluck S."/>
            <person name="Richardson P."/>
            <person name="Mackenzie C."/>
            <person name="Choudhary M."/>
            <person name="Larimer F."/>
            <person name="Hauser L.J."/>
            <person name="Land M."/>
            <person name="Donohue T.J."/>
            <person name="Kaplan S."/>
        </authorList>
    </citation>
    <scope>NUCLEOTIDE SEQUENCE [LARGE SCALE GENOMIC DNA]</scope>
    <source>
        <strain>ATCC 17023 / DSM 158 / JCM 6121 / CCUG 31486 / LMG 2827 / NBRC 12203 / NCIMB 8253 / ATH 2.4.1.</strain>
    </source>
</reference>